<dbReference type="EC" id="7.1.1.2" evidence="1"/>
<dbReference type="EMBL" id="Y07726">
    <property type="protein sequence ID" value="CAA69016.1"/>
    <property type="molecule type" value="Genomic_DNA"/>
</dbReference>
<dbReference type="RefSeq" id="NP_007443.1">
    <property type="nucleotide sequence ID" value="NC_001808.1"/>
</dbReference>
<dbReference type="SMR" id="O03205"/>
<dbReference type="GeneID" id="808105"/>
<dbReference type="CTD" id="4540"/>
<dbReference type="OMA" id="GVGIMSF"/>
<dbReference type="GO" id="GO:0005743">
    <property type="term" value="C:mitochondrial inner membrane"/>
    <property type="evidence" value="ECO:0000250"/>
    <property type="project" value="UniProtKB"/>
</dbReference>
<dbReference type="GO" id="GO:0008137">
    <property type="term" value="F:NADH dehydrogenase (ubiquinone) activity"/>
    <property type="evidence" value="ECO:0000250"/>
    <property type="project" value="UniProtKB"/>
</dbReference>
<dbReference type="GO" id="GO:0015990">
    <property type="term" value="P:electron transport coupled proton transport"/>
    <property type="evidence" value="ECO:0007669"/>
    <property type="project" value="TreeGrafter"/>
</dbReference>
<dbReference type="GO" id="GO:0006120">
    <property type="term" value="P:mitochondrial electron transport, NADH to ubiquinone"/>
    <property type="evidence" value="ECO:0000250"/>
    <property type="project" value="UniProtKB"/>
</dbReference>
<dbReference type="GO" id="GO:0032981">
    <property type="term" value="P:mitochondrial respiratory chain complex I assembly"/>
    <property type="evidence" value="ECO:0000250"/>
    <property type="project" value="UniProtKB"/>
</dbReference>
<dbReference type="InterPro" id="IPR010934">
    <property type="entry name" value="NADH_DH_su5_C"/>
</dbReference>
<dbReference type="InterPro" id="IPR018393">
    <property type="entry name" value="NADHpl_OxRdtase_5_subgr"/>
</dbReference>
<dbReference type="InterPro" id="IPR001750">
    <property type="entry name" value="ND/Mrp_TM"/>
</dbReference>
<dbReference type="InterPro" id="IPR003945">
    <property type="entry name" value="NU5C-like"/>
</dbReference>
<dbReference type="InterPro" id="IPR001516">
    <property type="entry name" value="Proton_antipo_N"/>
</dbReference>
<dbReference type="NCBIfam" id="TIGR01974">
    <property type="entry name" value="NDH_I_L"/>
    <property type="match status" value="1"/>
</dbReference>
<dbReference type="PANTHER" id="PTHR42829">
    <property type="entry name" value="NADH-UBIQUINONE OXIDOREDUCTASE CHAIN 5"/>
    <property type="match status" value="1"/>
</dbReference>
<dbReference type="PANTHER" id="PTHR42829:SF2">
    <property type="entry name" value="NADH-UBIQUINONE OXIDOREDUCTASE CHAIN 5"/>
    <property type="match status" value="1"/>
</dbReference>
<dbReference type="Pfam" id="PF06455">
    <property type="entry name" value="NADH5_C"/>
    <property type="match status" value="1"/>
</dbReference>
<dbReference type="Pfam" id="PF00361">
    <property type="entry name" value="Proton_antipo_M"/>
    <property type="match status" value="1"/>
</dbReference>
<dbReference type="Pfam" id="PF00662">
    <property type="entry name" value="Proton_antipo_N"/>
    <property type="match status" value="1"/>
</dbReference>
<dbReference type="PRINTS" id="PR01434">
    <property type="entry name" value="NADHDHGNASE5"/>
</dbReference>
<feature type="chain" id="PRO_0000118077" description="NADH-ubiquinone oxidoreductase chain 5">
    <location>
        <begin position="1"/>
        <end position="606"/>
    </location>
</feature>
<feature type="transmembrane region" description="Helical" evidence="3">
    <location>
        <begin position="4"/>
        <end position="24"/>
    </location>
</feature>
<feature type="transmembrane region" description="Helical" evidence="3">
    <location>
        <begin position="38"/>
        <end position="58"/>
    </location>
</feature>
<feature type="transmembrane region" description="Helical" evidence="3">
    <location>
        <begin position="87"/>
        <end position="107"/>
    </location>
</feature>
<feature type="transmembrane region" description="Helical" evidence="3">
    <location>
        <begin position="114"/>
        <end position="134"/>
    </location>
</feature>
<feature type="transmembrane region" description="Helical" evidence="3">
    <location>
        <begin position="140"/>
        <end position="160"/>
    </location>
</feature>
<feature type="transmembrane region" description="Helical" evidence="3">
    <location>
        <begin position="171"/>
        <end position="191"/>
    </location>
</feature>
<feature type="transmembrane region" description="Helical" evidence="3">
    <location>
        <begin position="213"/>
        <end position="233"/>
    </location>
</feature>
<feature type="transmembrane region" description="Helical" evidence="3">
    <location>
        <begin position="241"/>
        <end position="261"/>
    </location>
</feature>
<feature type="transmembrane region" description="Helical" evidence="3">
    <location>
        <begin position="273"/>
        <end position="293"/>
    </location>
</feature>
<feature type="transmembrane region" description="Helical" evidence="3">
    <location>
        <begin position="301"/>
        <end position="320"/>
    </location>
</feature>
<feature type="transmembrane region" description="Helical" evidence="3">
    <location>
        <begin position="325"/>
        <end position="347"/>
    </location>
</feature>
<feature type="transmembrane region" description="Helical" evidence="3">
    <location>
        <begin position="366"/>
        <end position="386"/>
    </location>
</feature>
<feature type="transmembrane region" description="Helical" evidence="3">
    <location>
        <begin position="409"/>
        <end position="429"/>
    </location>
</feature>
<feature type="transmembrane region" description="Helical" evidence="3">
    <location>
        <begin position="457"/>
        <end position="477"/>
    </location>
</feature>
<feature type="transmembrane region" description="Helical" evidence="3">
    <location>
        <begin position="488"/>
        <end position="508"/>
    </location>
</feature>
<feature type="transmembrane region" description="Helical" evidence="3">
    <location>
        <begin position="583"/>
        <end position="603"/>
    </location>
</feature>
<organism>
    <name type="scientific">Ceratotherium simum</name>
    <name type="common">White rhinoceros</name>
    <name type="synonym">Square-lipped rhinoceros</name>
    <dbReference type="NCBI Taxonomy" id="9807"/>
    <lineage>
        <taxon>Eukaryota</taxon>
        <taxon>Metazoa</taxon>
        <taxon>Chordata</taxon>
        <taxon>Craniata</taxon>
        <taxon>Vertebrata</taxon>
        <taxon>Euteleostomi</taxon>
        <taxon>Mammalia</taxon>
        <taxon>Eutheria</taxon>
        <taxon>Laurasiatheria</taxon>
        <taxon>Perissodactyla</taxon>
        <taxon>Rhinocerotidae</taxon>
        <taxon>Ceratotherium</taxon>
    </lineage>
</organism>
<name>NU5M_CERSI</name>
<geneLocation type="mitochondrion"/>
<protein>
    <recommendedName>
        <fullName>NADH-ubiquinone oxidoreductase chain 5</fullName>
        <ecNumber evidence="1">7.1.1.2</ecNumber>
    </recommendedName>
    <alternativeName>
        <fullName>NADH dehydrogenase subunit 5</fullName>
    </alternativeName>
</protein>
<proteinExistence type="inferred from homology"/>
<accession>O03205</accession>
<gene>
    <name type="primary">MT-ND5</name>
    <name type="synonym">MTND5</name>
    <name type="synonym">NADH5</name>
    <name type="synonym">ND5</name>
</gene>
<evidence type="ECO:0000250" key="1">
    <source>
        <dbReference type="UniProtKB" id="P03915"/>
    </source>
</evidence>
<evidence type="ECO:0000250" key="2">
    <source>
        <dbReference type="UniProtKB" id="P03920"/>
    </source>
</evidence>
<evidence type="ECO:0000255" key="3"/>
<evidence type="ECO:0000305" key="4"/>
<sequence>MNMFPSLMLTSLLMLTLPIITTTINTHKNSTYPYYVKNIISYAFITSLIPTMMFIHSGQEMIISNWHWMTIQTLKLSLSFKLDYFSMIFVPVALFVTWSIMEFSMWYMHSDPHITQFFKYLLMFLITMMILVTANNLFQLFIGWEGVGIMSFLLISWWYGRTDANTAALQAILYNRIGDIGFIMSMAWFLFNTNSWDLQQIFSLNYNHTDLPLMGLLLAATGKSAQFGLHPWLPSAMEGPTPVSALLHSSTMVVAGVFLLIRFHPLMENNKTVQTFTLCLGAITTLFTAICALTQNDIKKIIAFSTSSQLGLMIVTIGINQPYLAFLHICTHAFFKAMLFMCSGSIIHNLNDEQDIRKMGGLFKAMPFTSTSLIIGSLALTGMPFLTGFYSKDLIIETANTSYTNAWALLITLIATSLTAAYSTRMIFFTLLGQPRSLTLITINENNPLLMNSIKRLLIGSIFAGFFISNNIYPTTIPKTTMPHYLKLTALAVTILGFMMALELSLATYNLKLKHPSSPLKFSNLLGYFPTIFHRLPPLMGLSTSQKSASLLLDLIWLEKILPKSISQFQVKTSTLVSNQKGLIKLYFLSFLVTLTLSLLLLMPHG</sequence>
<keyword id="KW-0249">Electron transport</keyword>
<keyword id="KW-0472">Membrane</keyword>
<keyword id="KW-0496">Mitochondrion</keyword>
<keyword id="KW-0999">Mitochondrion inner membrane</keyword>
<keyword id="KW-0520">NAD</keyword>
<keyword id="KW-0679">Respiratory chain</keyword>
<keyword id="KW-1278">Translocase</keyword>
<keyword id="KW-0812">Transmembrane</keyword>
<keyword id="KW-1133">Transmembrane helix</keyword>
<keyword id="KW-0813">Transport</keyword>
<keyword id="KW-0830">Ubiquinone</keyword>
<reference key="1">
    <citation type="journal article" date="1997" name="Mol. Phylogenet. Evol.">
        <title>The complete mitochondrial DNA sequence of the white rhinoceros, Ceratotherium simum, and comparison with the mtDNA sequence of the Indian rhinoceros, Rhinoceros unicornis.</title>
        <authorList>
            <person name="Xu X."/>
            <person name="Arnason U."/>
        </authorList>
    </citation>
    <scope>NUCLEOTIDE SEQUENCE [GENOMIC DNA]</scope>
</reference>
<comment type="function">
    <text evidence="1">Core subunit of the mitochondrial membrane respiratory chain NADH dehydrogenase (Complex I) which catalyzes electron transfer from NADH through the respiratory chain, using ubiquinone as an electron acceptor. Essential for the catalytic activity and assembly of complex I.</text>
</comment>
<comment type="catalytic activity">
    <reaction evidence="1">
        <text>a ubiquinone + NADH + 5 H(+)(in) = a ubiquinol + NAD(+) + 4 H(+)(out)</text>
        <dbReference type="Rhea" id="RHEA:29091"/>
        <dbReference type="Rhea" id="RHEA-COMP:9565"/>
        <dbReference type="Rhea" id="RHEA-COMP:9566"/>
        <dbReference type="ChEBI" id="CHEBI:15378"/>
        <dbReference type="ChEBI" id="CHEBI:16389"/>
        <dbReference type="ChEBI" id="CHEBI:17976"/>
        <dbReference type="ChEBI" id="CHEBI:57540"/>
        <dbReference type="ChEBI" id="CHEBI:57945"/>
        <dbReference type="EC" id="7.1.1.2"/>
    </reaction>
</comment>
<comment type="subunit">
    <text evidence="2">Core subunit of respiratory chain NADH dehydrogenase (Complex I) which is composed of 45 different subunits.</text>
</comment>
<comment type="subcellular location">
    <subcellularLocation>
        <location evidence="2">Mitochondrion inner membrane</location>
        <topology evidence="3">Multi-pass membrane protein</topology>
    </subcellularLocation>
</comment>
<comment type="similarity">
    <text evidence="4">Belongs to the complex I subunit 5 family.</text>
</comment>